<keyword id="KW-0106">Calcium</keyword>
<keyword id="KW-0176">Collagen</keyword>
<keyword id="KW-0903">Direct protein sequencing</keyword>
<keyword id="KW-0272">Extracellular matrix</keyword>
<keyword id="KW-0379">Hydroxylation</keyword>
<keyword id="KW-0597">Phosphoprotein</keyword>
<keyword id="KW-0677">Repeat</keyword>
<keyword id="KW-0964">Secreted</keyword>
<accession>C0HJN7</accession>
<dbReference type="GO" id="GO:0005581">
    <property type="term" value="C:collagen trimer"/>
    <property type="evidence" value="ECO:0007669"/>
    <property type="project" value="UniProtKB-KW"/>
</dbReference>
<dbReference type="GO" id="GO:0031012">
    <property type="term" value="C:extracellular matrix"/>
    <property type="evidence" value="ECO:0007669"/>
    <property type="project" value="TreeGrafter"/>
</dbReference>
<dbReference type="GO" id="GO:0005615">
    <property type="term" value="C:extracellular space"/>
    <property type="evidence" value="ECO:0007669"/>
    <property type="project" value="TreeGrafter"/>
</dbReference>
<dbReference type="InterPro" id="IPR008160">
    <property type="entry name" value="Collagen"/>
</dbReference>
<dbReference type="InterPro" id="IPR050149">
    <property type="entry name" value="Collagen_superfamily"/>
</dbReference>
<dbReference type="PANTHER" id="PTHR24023">
    <property type="entry name" value="COLLAGEN ALPHA"/>
    <property type="match status" value="1"/>
</dbReference>
<dbReference type="PANTHER" id="PTHR24023:SF1082">
    <property type="entry name" value="COLLAGEN TRIPLE HELIX REPEAT"/>
    <property type="match status" value="1"/>
</dbReference>
<dbReference type="Pfam" id="PF01391">
    <property type="entry name" value="Collagen"/>
    <property type="match status" value="11"/>
</dbReference>
<comment type="function">
    <text evidence="6">Type I collagen is a member of group I collagen (fibrillar forming collagen).</text>
</comment>
<comment type="subunit">
    <text evidence="6">Trimers of one alpha 2(I) and two alpha 1(I) chains.</text>
</comment>
<comment type="subcellular location">
    <subcellularLocation>
        <location>Secreted</location>
    </subcellularLocation>
    <subcellularLocation>
        <location>Secreted</location>
        <location>Extracellular space</location>
    </subcellularLocation>
    <subcellularLocation>
        <location evidence="6">Secreted</location>
        <location evidence="6">Extracellular space</location>
        <location evidence="6">Extracellular matrix</location>
    </subcellularLocation>
</comment>
<comment type="tissue specificity">
    <text evidence="6">Forms the fibrils of tendon, ligaments and bones. In bones, the fibrils are mineralized with calcium hydroxyapatite.</text>
</comment>
<comment type="PTM">
    <text evidence="6">Prolines at the third position of the tripeptide repeating unit (G-X-Y) are hydroxylated in some or all of the chains.</text>
</comment>
<comment type="similarity">
    <text evidence="6">Belongs to the fibrillar collagen family.</text>
</comment>
<organism evidence="5">
    <name type="scientific">Tapirus terrestris</name>
    <name type="common">Lowland tapir</name>
    <name type="synonym">Brazilian tapir</name>
    <dbReference type="NCBI Taxonomy" id="9801"/>
    <lineage>
        <taxon>Eukaryota</taxon>
        <taxon>Metazoa</taxon>
        <taxon>Chordata</taxon>
        <taxon>Craniata</taxon>
        <taxon>Vertebrata</taxon>
        <taxon>Euteleostomi</taxon>
        <taxon>Mammalia</taxon>
        <taxon>Eutheria</taxon>
        <taxon>Laurasiatheria</taxon>
        <taxon>Perissodactyla</taxon>
        <taxon>Tapiridae</taxon>
        <taxon>Tapirus</taxon>
    </lineage>
</organism>
<proteinExistence type="evidence at protein level"/>
<feature type="chain" id="PRO_0000433498" description="Collagen alpha-1(I) chain" evidence="4">
    <location>
        <begin position="1"/>
        <end position="963"/>
    </location>
</feature>
<feature type="region of interest" description="Disordered" evidence="3">
    <location>
        <begin position="1"/>
        <end position="963"/>
    </location>
</feature>
<feature type="compositionally biased region" description="Basic and acidic residues" evidence="3">
    <location>
        <begin position="40"/>
        <end position="54"/>
    </location>
</feature>
<feature type="compositionally biased region" description="Low complexity" evidence="3">
    <location>
        <begin position="90"/>
        <end position="106"/>
    </location>
</feature>
<feature type="compositionally biased region" description="Low complexity" evidence="3">
    <location>
        <begin position="129"/>
        <end position="142"/>
    </location>
</feature>
<feature type="compositionally biased region" description="Pro residues" evidence="3">
    <location>
        <begin position="144"/>
        <end position="156"/>
    </location>
</feature>
<feature type="compositionally biased region" description="Low complexity" evidence="3">
    <location>
        <begin position="190"/>
        <end position="229"/>
    </location>
</feature>
<feature type="compositionally biased region" description="Gly residues" evidence="3">
    <location>
        <begin position="296"/>
        <end position="305"/>
    </location>
</feature>
<feature type="compositionally biased region" description="Low complexity" evidence="3">
    <location>
        <begin position="313"/>
        <end position="337"/>
    </location>
</feature>
<feature type="compositionally biased region" description="Low complexity" evidence="3">
    <location>
        <begin position="349"/>
        <end position="375"/>
    </location>
</feature>
<feature type="compositionally biased region" description="Low complexity" evidence="3">
    <location>
        <begin position="384"/>
        <end position="403"/>
    </location>
</feature>
<feature type="compositionally biased region" description="Low complexity" evidence="3">
    <location>
        <begin position="482"/>
        <end position="495"/>
    </location>
</feature>
<feature type="compositionally biased region" description="Low complexity" evidence="3">
    <location>
        <begin position="555"/>
        <end position="569"/>
    </location>
</feature>
<feature type="compositionally biased region" description="Low complexity" evidence="3">
    <location>
        <begin position="582"/>
        <end position="609"/>
    </location>
</feature>
<feature type="compositionally biased region" description="Pro residues" evidence="3">
    <location>
        <begin position="611"/>
        <end position="623"/>
    </location>
</feature>
<feature type="compositionally biased region" description="Low complexity" evidence="3">
    <location>
        <begin position="638"/>
        <end position="654"/>
    </location>
</feature>
<feature type="compositionally biased region" description="Low complexity" evidence="3">
    <location>
        <begin position="683"/>
        <end position="692"/>
    </location>
</feature>
<feature type="compositionally biased region" description="Low complexity" evidence="3">
    <location>
        <begin position="702"/>
        <end position="726"/>
    </location>
</feature>
<feature type="compositionally biased region" description="Pro residues" evidence="3">
    <location>
        <begin position="767"/>
        <end position="777"/>
    </location>
</feature>
<feature type="compositionally biased region" description="Pro residues" evidence="3">
    <location>
        <begin position="813"/>
        <end position="828"/>
    </location>
</feature>
<feature type="compositionally biased region" description="Low complexity" evidence="3">
    <location>
        <begin position="849"/>
        <end position="863"/>
    </location>
</feature>
<feature type="compositionally biased region" description="Basic and acidic residues" evidence="3">
    <location>
        <begin position="864"/>
        <end position="878"/>
    </location>
</feature>
<feature type="compositionally biased region" description="Low complexity" evidence="3">
    <location>
        <begin position="897"/>
        <end position="930"/>
    </location>
</feature>
<feature type="compositionally biased region" description="Pro residues" evidence="3">
    <location>
        <begin position="948"/>
        <end position="963"/>
    </location>
</feature>
<feature type="modified residue" description="Phosphoserine" evidence="2">
    <location>
        <position position="82"/>
    </location>
</feature>
<feature type="modified residue" description="Phosphoserine" evidence="2">
    <location>
        <position position="558"/>
    </location>
</feature>
<feature type="unsure residue" description="I or L" evidence="4">
    <location>
        <position position="11"/>
    </location>
</feature>
<feature type="unsure residue" description="I or L" evidence="4">
    <location>
        <position position="66"/>
    </location>
</feature>
<feature type="unsure residue" description="I or L" evidence="4">
    <location>
        <position position="72"/>
    </location>
</feature>
<feature type="unsure residue" description="I or L" evidence="4">
    <location>
        <position position="84"/>
    </location>
</feature>
<feature type="unsure residue" description="I or L" evidence="4">
    <location>
        <position position="117"/>
    </location>
</feature>
<feature type="unsure residue" description="I or L" evidence="4">
    <location>
        <position position="216"/>
    </location>
</feature>
<feature type="unsure residue" description="I or L" evidence="4">
    <location>
        <position position="267"/>
    </location>
</feature>
<feature type="unsure residue" description="I or L" evidence="4">
    <location>
        <position position="291"/>
    </location>
</feature>
<feature type="unsure residue" description="I or L" evidence="4">
    <location>
        <position position="345"/>
    </location>
</feature>
<feature type="unsure residue" description="I or L" evidence="4">
    <location>
        <position position="351"/>
    </location>
</feature>
<feature type="unsure residue" description="I or L" evidence="4">
    <location>
        <position position="453"/>
    </location>
</feature>
<feature type="unsure residue" description="I or L" evidence="4">
    <location>
        <position position="497"/>
    </location>
</feature>
<feature type="unsure residue" description="I or L" evidence="4">
    <location>
        <position position="509"/>
    </location>
</feature>
<feature type="unsure residue" description="I or L" evidence="4">
    <location>
        <position position="536"/>
    </location>
</feature>
<feature type="unsure residue" description="I or L" evidence="4">
    <location>
        <position position="540"/>
    </location>
</feature>
<feature type="unsure residue" description="I or L" evidence="4">
    <location>
        <position position="624"/>
    </location>
</feature>
<feature type="unsure residue" description="I or L" evidence="4">
    <location>
        <position position="725"/>
    </location>
</feature>
<feature type="unsure residue" description="I or L" evidence="4">
    <location>
        <position position="734"/>
    </location>
</feature>
<feature type="unsure residue" description="I or L" evidence="4">
    <location>
        <position position="746"/>
    </location>
</feature>
<feature type="unsure residue" description="I or L" evidence="4">
    <location>
        <position position="776"/>
    </location>
</feature>
<feature type="unsure residue" description="I or L" evidence="4">
    <location>
        <position position="849"/>
    </location>
</feature>
<feature type="unsure residue" description="I or L" evidence="4">
    <location>
        <position position="878"/>
    </location>
</feature>
<feature type="unsure residue" description="I or L" evidence="4">
    <location>
        <position position="887"/>
    </location>
</feature>
<feature type="unsure residue" description="I or L" evidence="4">
    <location>
        <position position="926"/>
    </location>
</feature>
<feature type="unsure residue" description="I or L" evidence="4">
    <location>
        <position position="929"/>
    </location>
</feature>
<feature type="unsure residue" description="I or L" evidence="4">
    <location>
        <position position="933"/>
    </location>
</feature>
<feature type="non-consecutive residues" evidence="5">
    <location>
        <begin position="23"/>
        <end position="24"/>
    </location>
</feature>
<feature type="non-consecutive residues" evidence="5">
    <location>
        <begin position="452"/>
        <end position="453"/>
    </location>
</feature>
<feature type="non-consecutive residues" evidence="5">
    <location>
        <begin position="496"/>
        <end position="497"/>
    </location>
</feature>
<sequence>GPMGPSGPRGIPGPPGAPGPQGFASGPMGPRGPPGPPGKNGDDGEAGKPGRPGERGPPGPQGARGIPGTAGIPGMKGHRGFSGIDGAKGDAGPAGPKGEPGSPGENGAPGQMGPRGIPGERGRPGAPGPAGARGNDGATGAAGPPGPTGPAGPPGFPGAVGAKGEAGPQGARGSEGPQGVRGEPGPPGPAGAAGPAGNPGADGQPGAKGANGAPGIAGAPGFPGARGPSGPQGPSGPPGPKGNSGEPGAPGSKGDTGAKGEPGPTGIQGPPGPAGEEGKRGARGEPGPTGIPGPPGERGGPGARGFPGSDGVAGPKGPAGERGAPGPAGPKGSPGEAGRPGEAGIPGAKGITGSPGSPGPDGKTGPPGPAGQDGRPGPPGPPGARGQAGVMGFPGPKGAAGEPGKAGERGVPGPPGAVGPAGKDGEAGAQGPPGPAGPAGERGEQGPAGSPGIGAPGPSGARGERGFPGERGVQGPPGPAGPRGANGAPGNDGAKGIQGMPGERGAAGIPGPKGDRGDAGPKGADGSPGKDGVRGITGPIGPPGPAGAPGDKGESGPSGPAGPTGARGAPGDRGEPGPPGPAGFAGPPGADGQPGAKGEPGDAGAKGDAGPPGPAGPTGPPGPIGNVGAPGPKGARGSAGPPGATGFPGAAGRVGPPGPSGNAGPPGPPGPVGKEGGKGPRGETGPAGRPGEAGPPGPPGPAGEKGSPGADGPAGAPGTPGPQGIAGQRGVVGIPGQRGERGFPGIPGPSGEPGKQGPSGASGERGPPGPVGPPGIAGPPGESGREGAPGAEGSPGRDGSPGPKGDRGETGPAGPPGAPGAPGAPGPVGPAGKSGDRGETGPAGPAGPIGPVGARGPAGPQGPRGDKGETGEQGDRGIKGHRGFSGIQGPPGPPGSPGEQGPSGASGPAGPRGPPGSAGAPGKDGINGIPGPIGPPGPRGRTGDAGPVGPPGPPGPPGPPGPP</sequence>
<gene>
    <name evidence="1" type="primary">COL1A1</name>
</gene>
<evidence type="ECO:0000250" key="1">
    <source>
        <dbReference type="UniProtKB" id="P02452"/>
    </source>
</evidence>
<evidence type="ECO:0000250" key="2">
    <source>
        <dbReference type="UniProtKB" id="P02454"/>
    </source>
</evidence>
<evidence type="ECO:0000256" key="3">
    <source>
        <dbReference type="SAM" id="MobiDB-lite"/>
    </source>
</evidence>
<evidence type="ECO:0000269" key="4">
    <source>
    </source>
</evidence>
<evidence type="ECO:0000303" key="5">
    <source>
    </source>
</evidence>
<evidence type="ECO:0000305" key="6"/>
<protein>
    <recommendedName>
        <fullName evidence="5">Collagen alpha-1(I) chain</fullName>
    </recommendedName>
    <alternativeName>
        <fullName evidence="1">Alpha-1 type I collagen</fullName>
    </alternativeName>
</protein>
<name>CO1A1_TAPTE</name>
<reference evidence="6" key="1">
    <citation type="journal article" date="2015" name="Nature">
        <title>Ancient proteins resolve the evolutionary history of Darwin's South American ungulates.</title>
        <authorList>
            <person name="Welker F."/>
            <person name="Collins M.J."/>
            <person name="Thomas J.A."/>
            <person name="Wadsley M."/>
            <person name="Brace S."/>
            <person name="Cappellini E."/>
            <person name="Turvey S.T."/>
            <person name="Reguero M."/>
            <person name="Gelfo J.N."/>
            <person name="Kramarz A."/>
            <person name="Burger J."/>
            <person name="Thomas-Oates J."/>
            <person name="Ashford D.A."/>
            <person name="Ashton P.D."/>
            <person name="Rowsell K."/>
            <person name="Porter D.M."/>
            <person name="Kessler B."/>
            <person name="Fischer R."/>
            <person name="Baessmann C."/>
            <person name="Kaspar S."/>
            <person name="Olsen J.V."/>
            <person name="Kiley P."/>
            <person name="Elliott J.A."/>
            <person name="Kelstrup C.D."/>
            <person name="Mullin V."/>
            <person name="Hofreiter M."/>
            <person name="Willerslev E."/>
            <person name="Hublin J.J."/>
            <person name="Orlando L."/>
            <person name="Barnes I."/>
            <person name="MacPhee R.D."/>
        </authorList>
    </citation>
    <scope>PROTEIN SEQUENCE</scope>
    <scope>IDENTIFICATION BY MASS SPECTROMETRY</scope>
    <source>
        <tissue evidence="5">Bone</tissue>
    </source>
</reference>